<proteinExistence type="inferred from homology"/>
<organism>
    <name type="scientific">Escherichia coli O9:H4 (strain HS)</name>
    <dbReference type="NCBI Taxonomy" id="331112"/>
    <lineage>
        <taxon>Bacteria</taxon>
        <taxon>Pseudomonadati</taxon>
        <taxon>Pseudomonadota</taxon>
        <taxon>Gammaproteobacteria</taxon>
        <taxon>Enterobacterales</taxon>
        <taxon>Enterobacteriaceae</taxon>
        <taxon>Escherichia</taxon>
    </lineage>
</organism>
<comment type="function">
    <text evidence="1">Acts as an alpha-ketoglutarate-dependent dioxygenase catalyzing hydroxylation of glutarate (GA) to L-2-hydroxyglutarate (L2HG). Functions in a L-lysine degradation pathway that proceeds via cadaverine, glutarate and L-2-hydroxyglutarate.</text>
</comment>
<comment type="catalytic activity">
    <reaction evidence="1">
        <text>glutarate + 2-oxoglutarate + O2 = (S)-2-hydroxyglutarate + succinate + CO2</text>
        <dbReference type="Rhea" id="RHEA:13821"/>
        <dbReference type="ChEBI" id="CHEBI:15379"/>
        <dbReference type="ChEBI" id="CHEBI:16526"/>
        <dbReference type="ChEBI" id="CHEBI:16782"/>
        <dbReference type="ChEBI" id="CHEBI:16810"/>
        <dbReference type="ChEBI" id="CHEBI:30031"/>
        <dbReference type="ChEBI" id="CHEBI:30921"/>
        <dbReference type="EC" id="1.14.11.64"/>
    </reaction>
    <physiologicalReaction direction="left-to-right" evidence="1">
        <dbReference type="Rhea" id="RHEA:13822"/>
    </physiologicalReaction>
</comment>
<comment type="cofactor">
    <cofactor evidence="1">
        <name>Fe(2+)</name>
        <dbReference type="ChEBI" id="CHEBI:29033"/>
    </cofactor>
    <text evidence="1">Binds 1 Fe(2+) ion per subunit.</text>
</comment>
<comment type="pathway">
    <text evidence="1">Amino-acid degradation.</text>
</comment>
<comment type="subunit">
    <text evidence="1">Homotetramer.</text>
</comment>
<comment type="similarity">
    <text evidence="1">Belongs to the glutarate hydroxylase family.</text>
</comment>
<evidence type="ECO:0000255" key="1">
    <source>
        <dbReference type="HAMAP-Rule" id="MF_01083"/>
    </source>
</evidence>
<keyword id="KW-0223">Dioxygenase</keyword>
<keyword id="KW-0408">Iron</keyword>
<keyword id="KW-0479">Metal-binding</keyword>
<keyword id="KW-0560">Oxidoreductase</keyword>
<protein>
    <recommendedName>
        <fullName evidence="1">Glutarate 2-hydroxylase</fullName>
        <shortName evidence="1">G-2-H</shortName>
        <ecNumber evidence="1">1.14.11.64</ecNumber>
    </recommendedName>
</protein>
<sequence>MNALTAVHNNAVDSGQDYSGFTLIPSAQSPRLLELTFTEQTTKQFLEQVAEWPVQALEYKSFLRFRVGKILDDLCANQLQPLLLKTLLNRAEGALLINAVGIDDVAQADEMVKLATAVAHLIGRSNFDAMSGQYYARFVVKNVDNSDSYLRQPHRVMELHNDGTYVEEITDYVLMMKIDEQNMQGGNSLLLHLDDWEHLDHYFRHPLARRPMRFAAPPSKNVSKDVFHPVFDVDQQGRPVMRYIDQFVQPKDFEEGVWLSELSDAIETSKGILSVPVPVGKFLLINNLFWLHGRDRFTPHPDLRRELMRQRGYFAYATHHYQTHQ</sequence>
<reference key="1">
    <citation type="journal article" date="2008" name="J. Bacteriol.">
        <title>The pangenome structure of Escherichia coli: comparative genomic analysis of E. coli commensal and pathogenic isolates.</title>
        <authorList>
            <person name="Rasko D.A."/>
            <person name="Rosovitz M.J."/>
            <person name="Myers G.S.A."/>
            <person name="Mongodin E.F."/>
            <person name="Fricke W.F."/>
            <person name="Gajer P."/>
            <person name="Crabtree J."/>
            <person name="Sebaihia M."/>
            <person name="Thomson N.R."/>
            <person name="Chaudhuri R."/>
            <person name="Henderson I.R."/>
            <person name="Sperandio V."/>
            <person name="Ravel J."/>
        </authorList>
    </citation>
    <scope>NUCLEOTIDE SEQUENCE [LARGE SCALE GENOMIC DNA]</scope>
    <source>
        <strain>HS</strain>
    </source>
</reference>
<name>GLAH_ECOHS</name>
<gene>
    <name evidence="1" type="primary">glaH</name>
    <name type="ordered locus">EcHS_A2794</name>
</gene>
<feature type="chain" id="PRO_1000064807" description="Glutarate 2-hydroxylase">
    <location>
        <begin position="1"/>
        <end position="325"/>
    </location>
</feature>
<feature type="binding site" evidence="1">
    <location>
        <position position="160"/>
    </location>
    <ligand>
        <name>Fe cation</name>
        <dbReference type="ChEBI" id="CHEBI:24875"/>
    </ligand>
</feature>
<feature type="binding site" evidence="1">
    <location>
        <position position="162"/>
    </location>
    <ligand>
        <name>Fe cation</name>
        <dbReference type="ChEBI" id="CHEBI:24875"/>
    </ligand>
</feature>
<feature type="binding site" evidence="1">
    <location>
        <position position="292"/>
    </location>
    <ligand>
        <name>Fe cation</name>
        <dbReference type="ChEBI" id="CHEBI:24875"/>
    </ligand>
</feature>
<dbReference type="EC" id="1.14.11.64" evidence="1"/>
<dbReference type="EMBL" id="CP000802">
    <property type="protein sequence ID" value="ABV07044.1"/>
    <property type="molecule type" value="Genomic_DNA"/>
</dbReference>
<dbReference type="RefSeq" id="WP_000993087.1">
    <property type="nucleotide sequence ID" value="NC_009800.1"/>
</dbReference>
<dbReference type="SMR" id="A8A3E0"/>
<dbReference type="KEGG" id="ecx:EcHS_A2794"/>
<dbReference type="HOGENOM" id="CLU_075277_0_0_6"/>
<dbReference type="GO" id="GO:0008198">
    <property type="term" value="F:ferrous iron binding"/>
    <property type="evidence" value="ECO:0007669"/>
    <property type="project" value="UniProtKB-UniRule"/>
</dbReference>
<dbReference type="GO" id="GO:0106343">
    <property type="term" value="F:glutarate dioxygenase activity"/>
    <property type="evidence" value="ECO:0007669"/>
    <property type="project" value="UniProtKB-EC"/>
</dbReference>
<dbReference type="GO" id="GO:0050498">
    <property type="term" value="F:oxidoreductase activity, acting on paired donors, with incorporation or reduction of molecular oxygen, with 2-oxoglutarate as one donor, and the other dehydrogenated"/>
    <property type="evidence" value="ECO:0007669"/>
    <property type="project" value="UniProtKB-UniRule"/>
</dbReference>
<dbReference type="GO" id="GO:0019477">
    <property type="term" value="P:L-lysine catabolic process"/>
    <property type="evidence" value="ECO:0007669"/>
    <property type="project" value="UniProtKB-UniRule"/>
</dbReference>
<dbReference type="CDD" id="cd00250">
    <property type="entry name" value="CAS_like"/>
    <property type="match status" value="1"/>
</dbReference>
<dbReference type="FunFam" id="3.60.130.10:FF:000004">
    <property type="entry name" value="Glutarate 2-hydroxylase"/>
    <property type="match status" value="1"/>
</dbReference>
<dbReference type="Gene3D" id="3.60.130.10">
    <property type="entry name" value="Clavaminate synthase-like"/>
    <property type="match status" value="1"/>
</dbReference>
<dbReference type="HAMAP" id="MF_01083">
    <property type="entry name" value="glutarate_hydroxylase"/>
    <property type="match status" value="1"/>
</dbReference>
<dbReference type="InterPro" id="IPR015038">
    <property type="entry name" value="GlaH"/>
</dbReference>
<dbReference type="InterPro" id="IPR042098">
    <property type="entry name" value="TauD-like_sf"/>
</dbReference>
<dbReference type="NCBIfam" id="NF002814">
    <property type="entry name" value="PRK02963.1"/>
    <property type="match status" value="1"/>
</dbReference>
<dbReference type="Pfam" id="PF08943">
    <property type="entry name" value="CsiD"/>
    <property type="match status" value="1"/>
</dbReference>
<dbReference type="SUPFAM" id="SSF51197">
    <property type="entry name" value="Clavaminate synthase-like"/>
    <property type="match status" value="1"/>
</dbReference>
<accession>A8A3E0</accession>